<organism>
    <name type="scientific">Staphylococcus aureus (strain USA300 / TCH1516)</name>
    <dbReference type="NCBI Taxonomy" id="451516"/>
    <lineage>
        <taxon>Bacteria</taxon>
        <taxon>Bacillati</taxon>
        <taxon>Bacillota</taxon>
        <taxon>Bacilli</taxon>
        <taxon>Bacillales</taxon>
        <taxon>Staphylococcaceae</taxon>
        <taxon>Staphylococcus</taxon>
    </lineage>
</organism>
<proteinExistence type="inferred from homology"/>
<feature type="chain" id="PRO_1000079425" description="Small ribosomal subunit protein bS21">
    <location>
        <begin position="1"/>
        <end position="58"/>
    </location>
</feature>
<accession>A8Z4B4</accession>
<name>RS21_STAAT</name>
<comment type="similarity">
    <text evidence="1">Belongs to the bacterial ribosomal protein bS21 family.</text>
</comment>
<sequence>MSKTVVRKNESLEDALRRFKRSVSKSGTIQEVRKREFYEKPSVKRKKKSEAARKRKFK</sequence>
<gene>
    <name evidence="1" type="primary">rpsU</name>
    <name type="ordered locus">USA300HOU_1576</name>
</gene>
<protein>
    <recommendedName>
        <fullName evidence="1">Small ribosomal subunit protein bS21</fullName>
    </recommendedName>
    <alternativeName>
        <fullName evidence="2">30S ribosomal protein S21</fullName>
    </alternativeName>
</protein>
<evidence type="ECO:0000255" key="1">
    <source>
        <dbReference type="HAMAP-Rule" id="MF_00358"/>
    </source>
</evidence>
<evidence type="ECO:0000305" key="2"/>
<keyword id="KW-0687">Ribonucleoprotein</keyword>
<keyword id="KW-0689">Ribosomal protein</keyword>
<dbReference type="EMBL" id="CP000730">
    <property type="protein sequence ID" value="ABX29583.1"/>
    <property type="molecule type" value="Genomic_DNA"/>
</dbReference>
<dbReference type="RefSeq" id="WP_000048060.1">
    <property type="nucleotide sequence ID" value="NC_010079.1"/>
</dbReference>
<dbReference type="SMR" id="A8Z4B4"/>
<dbReference type="GeneID" id="98345946"/>
<dbReference type="KEGG" id="sax:USA300HOU_1576"/>
<dbReference type="HOGENOM" id="CLU_159258_3_2_9"/>
<dbReference type="GO" id="GO:1990904">
    <property type="term" value="C:ribonucleoprotein complex"/>
    <property type="evidence" value="ECO:0007669"/>
    <property type="project" value="UniProtKB-KW"/>
</dbReference>
<dbReference type="GO" id="GO:0005840">
    <property type="term" value="C:ribosome"/>
    <property type="evidence" value="ECO:0007669"/>
    <property type="project" value="UniProtKB-KW"/>
</dbReference>
<dbReference type="GO" id="GO:0003735">
    <property type="term" value="F:structural constituent of ribosome"/>
    <property type="evidence" value="ECO:0007669"/>
    <property type="project" value="InterPro"/>
</dbReference>
<dbReference type="GO" id="GO:0006412">
    <property type="term" value="P:translation"/>
    <property type="evidence" value="ECO:0007669"/>
    <property type="project" value="UniProtKB-UniRule"/>
</dbReference>
<dbReference type="Gene3D" id="1.20.5.1150">
    <property type="entry name" value="Ribosomal protein S8"/>
    <property type="match status" value="1"/>
</dbReference>
<dbReference type="HAMAP" id="MF_00358">
    <property type="entry name" value="Ribosomal_bS21"/>
    <property type="match status" value="1"/>
</dbReference>
<dbReference type="InterPro" id="IPR001911">
    <property type="entry name" value="Ribosomal_bS21"/>
</dbReference>
<dbReference type="InterPro" id="IPR018278">
    <property type="entry name" value="Ribosomal_bS21_CS"/>
</dbReference>
<dbReference type="InterPro" id="IPR038380">
    <property type="entry name" value="Ribosomal_bS21_sf"/>
</dbReference>
<dbReference type="NCBIfam" id="TIGR00030">
    <property type="entry name" value="S21p"/>
    <property type="match status" value="1"/>
</dbReference>
<dbReference type="PANTHER" id="PTHR21109">
    <property type="entry name" value="MITOCHONDRIAL 28S RIBOSOMAL PROTEIN S21"/>
    <property type="match status" value="1"/>
</dbReference>
<dbReference type="PANTHER" id="PTHR21109:SF22">
    <property type="entry name" value="SMALL RIBOSOMAL SUBUNIT PROTEIN BS21"/>
    <property type="match status" value="1"/>
</dbReference>
<dbReference type="Pfam" id="PF01165">
    <property type="entry name" value="Ribosomal_S21"/>
    <property type="match status" value="1"/>
</dbReference>
<dbReference type="PRINTS" id="PR00976">
    <property type="entry name" value="RIBOSOMALS21"/>
</dbReference>
<dbReference type="PROSITE" id="PS01181">
    <property type="entry name" value="RIBOSOMAL_S21"/>
    <property type="match status" value="1"/>
</dbReference>
<reference key="1">
    <citation type="journal article" date="2007" name="BMC Microbiol.">
        <title>Subtle genetic changes enhance virulence of methicillin resistant and sensitive Staphylococcus aureus.</title>
        <authorList>
            <person name="Highlander S.K."/>
            <person name="Hulten K.G."/>
            <person name="Qin X."/>
            <person name="Jiang H."/>
            <person name="Yerrapragada S."/>
            <person name="Mason E.O. Jr."/>
            <person name="Shang Y."/>
            <person name="Williams T.M."/>
            <person name="Fortunov R.M."/>
            <person name="Liu Y."/>
            <person name="Igboeli O."/>
            <person name="Petrosino J."/>
            <person name="Tirumalai M."/>
            <person name="Uzman A."/>
            <person name="Fox G.E."/>
            <person name="Cardenas A.M."/>
            <person name="Muzny D.M."/>
            <person name="Hemphill L."/>
            <person name="Ding Y."/>
            <person name="Dugan S."/>
            <person name="Blyth P.R."/>
            <person name="Buhay C.J."/>
            <person name="Dinh H.H."/>
            <person name="Hawes A.C."/>
            <person name="Holder M."/>
            <person name="Kovar C.L."/>
            <person name="Lee S.L."/>
            <person name="Liu W."/>
            <person name="Nazareth L.V."/>
            <person name="Wang Q."/>
            <person name="Zhou J."/>
            <person name="Kaplan S.L."/>
            <person name="Weinstock G.M."/>
        </authorList>
    </citation>
    <scope>NUCLEOTIDE SEQUENCE [LARGE SCALE GENOMIC DNA]</scope>
    <source>
        <strain>USA300 / TCH1516</strain>
    </source>
</reference>